<gene>
    <name evidence="1" type="primary">proB</name>
    <name type="ordered locus">RHE_CH04068</name>
</gene>
<proteinExistence type="inferred from homology"/>
<accession>Q2K2X5</accession>
<dbReference type="EC" id="2.7.2.11" evidence="1"/>
<dbReference type="EMBL" id="CP000133">
    <property type="protein sequence ID" value="ABC92811.1"/>
    <property type="molecule type" value="Genomic_DNA"/>
</dbReference>
<dbReference type="RefSeq" id="WP_011427251.1">
    <property type="nucleotide sequence ID" value="NC_007761.1"/>
</dbReference>
<dbReference type="SMR" id="Q2K2X5"/>
<dbReference type="KEGG" id="ret:RHE_CH04068"/>
<dbReference type="eggNOG" id="COG0263">
    <property type="taxonomic scope" value="Bacteria"/>
</dbReference>
<dbReference type="HOGENOM" id="CLU_025400_2_0_5"/>
<dbReference type="OrthoDB" id="9804434at2"/>
<dbReference type="UniPathway" id="UPA00098">
    <property type="reaction ID" value="UER00359"/>
</dbReference>
<dbReference type="Proteomes" id="UP000001936">
    <property type="component" value="Chromosome"/>
</dbReference>
<dbReference type="GO" id="GO:0005829">
    <property type="term" value="C:cytosol"/>
    <property type="evidence" value="ECO:0007669"/>
    <property type="project" value="TreeGrafter"/>
</dbReference>
<dbReference type="GO" id="GO:0005524">
    <property type="term" value="F:ATP binding"/>
    <property type="evidence" value="ECO:0007669"/>
    <property type="project" value="UniProtKB-KW"/>
</dbReference>
<dbReference type="GO" id="GO:0004349">
    <property type="term" value="F:glutamate 5-kinase activity"/>
    <property type="evidence" value="ECO:0007669"/>
    <property type="project" value="UniProtKB-UniRule"/>
</dbReference>
<dbReference type="GO" id="GO:0003723">
    <property type="term" value="F:RNA binding"/>
    <property type="evidence" value="ECO:0007669"/>
    <property type="project" value="InterPro"/>
</dbReference>
<dbReference type="GO" id="GO:0055129">
    <property type="term" value="P:L-proline biosynthetic process"/>
    <property type="evidence" value="ECO:0007669"/>
    <property type="project" value="UniProtKB-UniRule"/>
</dbReference>
<dbReference type="CDD" id="cd04242">
    <property type="entry name" value="AAK_G5K_ProB"/>
    <property type="match status" value="1"/>
</dbReference>
<dbReference type="CDD" id="cd21157">
    <property type="entry name" value="PUA_G5K"/>
    <property type="match status" value="1"/>
</dbReference>
<dbReference type="FunFam" id="2.30.130.10:FF:000007">
    <property type="entry name" value="Glutamate 5-kinase"/>
    <property type="match status" value="1"/>
</dbReference>
<dbReference type="FunFam" id="3.40.1160.10:FF:000018">
    <property type="entry name" value="Glutamate 5-kinase"/>
    <property type="match status" value="1"/>
</dbReference>
<dbReference type="Gene3D" id="3.40.1160.10">
    <property type="entry name" value="Acetylglutamate kinase-like"/>
    <property type="match status" value="1"/>
</dbReference>
<dbReference type="Gene3D" id="2.30.130.10">
    <property type="entry name" value="PUA domain"/>
    <property type="match status" value="1"/>
</dbReference>
<dbReference type="HAMAP" id="MF_00456">
    <property type="entry name" value="ProB"/>
    <property type="match status" value="1"/>
</dbReference>
<dbReference type="InterPro" id="IPR036393">
    <property type="entry name" value="AceGlu_kinase-like_sf"/>
</dbReference>
<dbReference type="InterPro" id="IPR001048">
    <property type="entry name" value="Asp/Glu/Uridylate_kinase"/>
</dbReference>
<dbReference type="InterPro" id="IPR041739">
    <property type="entry name" value="G5K_ProB"/>
</dbReference>
<dbReference type="InterPro" id="IPR001057">
    <property type="entry name" value="Glu/AcGlu_kinase"/>
</dbReference>
<dbReference type="InterPro" id="IPR011529">
    <property type="entry name" value="Glu_5kinase"/>
</dbReference>
<dbReference type="InterPro" id="IPR005715">
    <property type="entry name" value="Glu_5kinase/COase_Synthase"/>
</dbReference>
<dbReference type="InterPro" id="IPR019797">
    <property type="entry name" value="Glutamate_5-kinase_CS"/>
</dbReference>
<dbReference type="InterPro" id="IPR002478">
    <property type="entry name" value="PUA"/>
</dbReference>
<dbReference type="InterPro" id="IPR015947">
    <property type="entry name" value="PUA-like_sf"/>
</dbReference>
<dbReference type="InterPro" id="IPR036974">
    <property type="entry name" value="PUA_sf"/>
</dbReference>
<dbReference type="NCBIfam" id="TIGR01027">
    <property type="entry name" value="proB"/>
    <property type="match status" value="1"/>
</dbReference>
<dbReference type="PANTHER" id="PTHR43654">
    <property type="entry name" value="GLUTAMATE 5-KINASE"/>
    <property type="match status" value="1"/>
</dbReference>
<dbReference type="PANTHER" id="PTHR43654:SF1">
    <property type="entry name" value="ISOPENTENYL PHOSPHATE KINASE"/>
    <property type="match status" value="1"/>
</dbReference>
<dbReference type="Pfam" id="PF00696">
    <property type="entry name" value="AA_kinase"/>
    <property type="match status" value="1"/>
</dbReference>
<dbReference type="Pfam" id="PF01472">
    <property type="entry name" value="PUA"/>
    <property type="match status" value="1"/>
</dbReference>
<dbReference type="PIRSF" id="PIRSF000729">
    <property type="entry name" value="GK"/>
    <property type="match status" value="1"/>
</dbReference>
<dbReference type="PRINTS" id="PR00474">
    <property type="entry name" value="GLU5KINASE"/>
</dbReference>
<dbReference type="SMART" id="SM00359">
    <property type="entry name" value="PUA"/>
    <property type="match status" value="1"/>
</dbReference>
<dbReference type="SUPFAM" id="SSF53633">
    <property type="entry name" value="Carbamate kinase-like"/>
    <property type="match status" value="1"/>
</dbReference>
<dbReference type="SUPFAM" id="SSF88697">
    <property type="entry name" value="PUA domain-like"/>
    <property type="match status" value="1"/>
</dbReference>
<dbReference type="PROSITE" id="PS00902">
    <property type="entry name" value="GLUTAMATE_5_KINASE"/>
    <property type="match status" value="1"/>
</dbReference>
<dbReference type="PROSITE" id="PS50890">
    <property type="entry name" value="PUA"/>
    <property type="match status" value="1"/>
</dbReference>
<evidence type="ECO:0000255" key="1">
    <source>
        <dbReference type="HAMAP-Rule" id="MF_00456"/>
    </source>
</evidence>
<sequence>MTSRKPLGRYRRIVIKIGSALLVDRKAGLKKAWLDAMCADIAGLKARGIDVLVVSSGAIALGRSVLDLPSGALKLEESQAAAAVGQIALARAWSESLSRDEIVAGQILLTLGDTEERRRYLNARATINQLLKIGAVPIINENDTVATSEIRYGDNDRLAARVATMTGADLLILLSDIDGLYTAPPHLDPNATFLETISEITPEIEAMAGGAASELSRGGMRTKIDAGKIATTSGCAMIIASGKTESPLSAIENGARSSWFAPSGTPVTARKTWIAGQLQPAGELHVDEGAVTALGAGKSLLPAGLRSVSGLFSRGDTVAIIGPAGREIARGLVSYDAEDARRIAGRKSAEIEAILGYAGRAAMVHRDDMVMTAQIRPKSERQKKDASYA</sequence>
<keyword id="KW-0028">Amino-acid biosynthesis</keyword>
<keyword id="KW-0067">ATP-binding</keyword>
<keyword id="KW-0963">Cytoplasm</keyword>
<keyword id="KW-0418">Kinase</keyword>
<keyword id="KW-0547">Nucleotide-binding</keyword>
<keyword id="KW-0641">Proline biosynthesis</keyword>
<keyword id="KW-1185">Reference proteome</keyword>
<keyword id="KW-0808">Transferase</keyword>
<organism>
    <name type="scientific">Rhizobium etli (strain ATCC 51251 / DSM 11541 / JCM 21823 / NBRC 15573 / CFN 42)</name>
    <dbReference type="NCBI Taxonomy" id="347834"/>
    <lineage>
        <taxon>Bacteria</taxon>
        <taxon>Pseudomonadati</taxon>
        <taxon>Pseudomonadota</taxon>
        <taxon>Alphaproteobacteria</taxon>
        <taxon>Hyphomicrobiales</taxon>
        <taxon>Rhizobiaceae</taxon>
        <taxon>Rhizobium/Agrobacterium group</taxon>
        <taxon>Rhizobium</taxon>
    </lineage>
</organism>
<feature type="chain" id="PRO_0000252992" description="Glutamate 5-kinase">
    <location>
        <begin position="1"/>
        <end position="389"/>
    </location>
</feature>
<feature type="domain" description="PUA" evidence="1">
    <location>
        <begin position="281"/>
        <end position="358"/>
    </location>
</feature>
<feature type="binding site" evidence="1">
    <location>
        <position position="16"/>
    </location>
    <ligand>
        <name>ATP</name>
        <dbReference type="ChEBI" id="CHEBI:30616"/>
    </ligand>
</feature>
<feature type="binding site" evidence="1">
    <location>
        <position position="56"/>
    </location>
    <ligand>
        <name>substrate</name>
    </ligand>
</feature>
<feature type="binding site" evidence="1">
    <location>
        <position position="143"/>
    </location>
    <ligand>
        <name>substrate</name>
    </ligand>
</feature>
<feature type="binding site" evidence="1">
    <location>
        <position position="155"/>
    </location>
    <ligand>
        <name>substrate</name>
    </ligand>
</feature>
<feature type="binding site" evidence="1">
    <location>
        <begin position="175"/>
        <end position="176"/>
    </location>
    <ligand>
        <name>ATP</name>
        <dbReference type="ChEBI" id="CHEBI:30616"/>
    </ligand>
</feature>
<protein>
    <recommendedName>
        <fullName evidence="1">Glutamate 5-kinase</fullName>
        <ecNumber evidence="1">2.7.2.11</ecNumber>
    </recommendedName>
    <alternativeName>
        <fullName evidence="1">Gamma-glutamyl kinase</fullName>
        <shortName evidence="1">GK</shortName>
    </alternativeName>
</protein>
<comment type="function">
    <text evidence="1">Catalyzes the transfer of a phosphate group to glutamate to form L-glutamate 5-phosphate.</text>
</comment>
<comment type="catalytic activity">
    <reaction evidence="1">
        <text>L-glutamate + ATP = L-glutamyl 5-phosphate + ADP</text>
        <dbReference type="Rhea" id="RHEA:14877"/>
        <dbReference type="ChEBI" id="CHEBI:29985"/>
        <dbReference type="ChEBI" id="CHEBI:30616"/>
        <dbReference type="ChEBI" id="CHEBI:58274"/>
        <dbReference type="ChEBI" id="CHEBI:456216"/>
        <dbReference type="EC" id="2.7.2.11"/>
    </reaction>
</comment>
<comment type="pathway">
    <text evidence="1">Amino-acid biosynthesis; L-proline biosynthesis; L-glutamate 5-semialdehyde from L-glutamate: step 1/2.</text>
</comment>
<comment type="subcellular location">
    <subcellularLocation>
        <location evidence="1">Cytoplasm</location>
    </subcellularLocation>
</comment>
<comment type="similarity">
    <text evidence="1">Belongs to the glutamate 5-kinase family.</text>
</comment>
<name>PROB_RHIEC</name>
<reference key="1">
    <citation type="journal article" date="2006" name="Proc. Natl. Acad. Sci. U.S.A.">
        <title>The partitioned Rhizobium etli genome: genetic and metabolic redundancy in seven interacting replicons.</title>
        <authorList>
            <person name="Gonzalez V."/>
            <person name="Santamaria R.I."/>
            <person name="Bustos P."/>
            <person name="Hernandez-Gonzalez I."/>
            <person name="Medrano-Soto A."/>
            <person name="Moreno-Hagelsieb G."/>
            <person name="Janga S.C."/>
            <person name="Ramirez M.A."/>
            <person name="Jimenez-Jacinto V."/>
            <person name="Collado-Vides J."/>
            <person name="Davila G."/>
        </authorList>
    </citation>
    <scope>NUCLEOTIDE SEQUENCE [LARGE SCALE GENOMIC DNA]</scope>
    <source>
        <strain>ATCC 51251 / DSM 11541 / JCM 21823 / NBRC 15573 / CFN 42</strain>
    </source>
</reference>